<organism>
    <name type="scientific">Salmonella paratyphi C (strain RKS4594)</name>
    <dbReference type="NCBI Taxonomy" id="476213"/>
    <lineage>
        <taxon>Bacteria</taxon>
        <taxon>Pseudomonadati</taxon>
        <taxon>Pseudomonadota</taxon>
        <taxon>Gammaproteobacteria</taxon>
        <taxon>Enterobacterales</taxon>
        <taxon>Enterobacteriaceae</taxon>
        <taxon>Salmonella</taxon>
    </lineage>
</organism>
<reference key="1">
    <citation type="journal article" date="2009" name="PLoS ONE">
        <title>Salmonella paratyphi C: genetic divergence from Salmonella choleraesuis and pathogenic convergence with Salmonella typhi.</title>
        <authorList>
            <person name="Liu W.-Q."/>
            <person name="Feng Y."/>
            <person name="Wang Y."/>
            <person name="Zou Q.-H."/>
            <person name="Chen F."/>
            <person name="Guo J.-T."/>
            <person name="Peng Y.-H."/>
            <person name="Jin Y."/>
            <person name="Li Y.-G."/>
            <person name="Hu S.-N."/>
            <person name="Johnston R.N."/>
            <person name="Liu G.-R."/>
            <person name="Liu S.-L."/>
        </authorList>
    </citation>
    <scope>NUCLEOTIDE SEQUENCE [LARGE SCALE GENOMIC DNA]</scope>
    <source>
        <strain>RKS4594</strain>
    </source>
</reference>
<evidence type="ECO:0000255" key="1">
    <source>
        <dbReference type="HAMAP-Rule" id="MF_00048"/>
    </source>
</evidence>
<dbReference type="EMBL" id="CP000857">
    <property type="protein sequence ID" value="ACN47421.1"/>
    <property type="molecule type" value="Genomic_DNA"/>
</dbReference>
<dbReference type="RefSeq" id="WP_000057285.1">
    <property type="nucleotide sequence ID" value="NC_012125.1"/>
</dbReference>
<dbReference type="SMR" id="C0PZ33"/>
<dbReference type="KEGG" id="sei:SPC_3336"/>
<dbReference type="HOGENOM" id="CLU_115353_1_0_6"/>
<dbReference type="Proteomes" id="UP000001599">
    <property type="component" value="Chromosome"/>
</dbReference>
<dbReference type="GO" id="GO:0003676">
    <property type="term" value="F:nucleic acid binding"/>
    <property type="evidence" value="ECO:0007669"/>
    <property type="project" value="InterPro"/>
</dbReference>
<dbReference type="CDD" id="cd20736">
    <property type="entry name" value="PoNe_Nuclease"/>
    <property type="match status" value="1"/>
</dbReference>
<dbReference type="Gene3D" id="3.40.1350.10">
    <property type="match status" value="1"/>
</dbReference>
<dbReference type="HAMAP" id="MF_00048">
    <property type="entry name" value="UPF0102"/>
    <property type="match status" value="1"/>
</dbReference>
<dbReference type="InterPro" id="IPR011335">
    <property type="entry name" value="Restrct_endonuc-II-like"/>
</dbReference>
<dbReference type="InterPro" id="IPR011856">
    <property type="entry name" value="tRNA_endonuc-like_dom_sf"/>
</dbReference>
<dbReference type="InterPro" id="IPR003509">
    <property type="entry name" value="UPF0102_YraN-like"/>
</dbReference>
<dbReference type="NCBIfam" id="NF009150">
    <property type="entry name" value="PRK12497.1-3"/>
    <property type="match status" value="1"/>
</dbReference>
<dbReference type="NCBIfam" id="TIGR00252">
    <property type="entry name" value="YraN family protein"/>
    <property type="match status" value="1"/>
</dbReference>
<dbReference type="PANTHER" id="PTHR34039">
    <property type="entry name" value="UPF0102 PROTEIN YRAN"/>
    <property type="match status" value="1"/>
</dbReference>
<dbReference type="PANTHER" id="PTHR34039:SF1">
    <property type="entry name" value="UPF0102 PROTEIN YRAN"/>
    <property type="match status" value="1"/>
</dbReference>
<dbReference type="Pfam" id="PF02021">
    <property type="entry name" value="UPF0102"/>
    <property type="match status" value="1"/>
</dbReference>
<dbReference type="SUPFAM" id="SSF52980">
    <property type="entry name" value="Restriction endonuclease-like"/>
    <property type="match status" value="1"/>
</dbReference>
<proteinExistence type="inferred from homology"/>
<protein>
    <recommendedName>
        <fullName evidence="1">UPF0102 protein YraN</fullName>
    </recommendedName>
</protein>
<accession>C0PZ33</accession>
<comment type="similarity">
    <text evidence="1">Belongs to the UPF0102 family.</text>
</comment>
<name>YRAN_SALPC</name>
<gene>
    <name evidence="1" type="primary">yraN</name>
    <name type="ordered locus">SPC_3336</name>
</gene>
<feature type="chain" id="PRO_1000200160" description="UPF0102 protein YraN">
    <location>
        <begin position="1"/>
        <end position="131"/>
    </location>
</feature>
<sequence length="131" mass="14903">MAQIPARGDCSRQLTRKQAGDAWEAAARRWLESKGLRFIAANVRERGGEIDLIMRDGKTTVFVEVRYRRSGLYGGAAASVTRSKQHKLLHTARLWLARQNGSFDTVDCRFDVLAFTGNEIEWFRDAFNDHS</sequence>